<comment type="function">
    <text evidence="1">Involved in both the arginine and lysine biosynthetic pathways. Phosphorylates the LysW-bound precursors glutamate (for arginine biosynthesis), respectively alpha-aminoadipate (for lysine biosynthesis).</text>
</comment>
<comment type="catalytic activity">
    <reaction evidence="1">
        <text>[amino-group carrier protein]-C-terminal-N-(1,4-dicarboxybutan-1-yl)-L-glutamine + ATP = [amino-group carrier protein]-C-terminal-N-(1-carboxy-5-phosphooxy-5-oxopentan-1-yl)-L-glutamine + ADP</text>
        <dbReference type="Rhea" id="RHEA:41944"/>
        <dbReference type="Rhea" id="RHEA-COMP:9694"/>
        <dbReference type="Rhea" id="RHEA-COMP:9712"/>
        <dbReference type="ChEBI" id="CHEBI:30616"/>
        <dbReference type="ChEBI" id="CHEBI:78499"/>
        <dbReference type="ChEBI" id="CHEBI:78503"/>
        <dbReference type="ChEBI" id="CHEBI:456216"/>
        <dbReference type="EC" id="2.7.2.17"/>
    </reaction>
</comment>
<comment type="catalytic activity">
    <reaction evidence="1">
        <text>[amino-group carrier protein]-C-terminal-gamma-(L-glutamyl)-L-glutamate + ATP = [amino-group carrier protein]-C-terminal-gamma-(5-phospho-L-glutamyl)-L-glutamate + ADP</text>
        <dbReference type="Rhea" id="RHEA:52632"/>
        <dbReference type="Rhea" id="RHEA-COMP:13311"/>
        <dbReference type="Rhea" id="RHEA-COMP:13313"/>
        <dbReference type="ChEBI" id="CHEBI:30616"/>
        <dbReference type="ChEBI" id="CHEBI:136714"/>
        <dbReference type="ChEBI" id="CHEBI:136717"/>
        <dbReference type="ChEBI" id="CHEBI:456216"/>
        <dbReference type="EC" id="2.7.2.19"/>
    </reaction>
</comment>
<comment type="pathway">
    <text evidence="1">Amino-acid biosynthesis; L-lysine biosynthesis via AAA pathway; L-lysine from L-alpha-aminoadipate (Thermus route): step 2/5.</text>
</comment>
<comment type="pathway">
    <text evidence="1">Amino-acid biosynthesis; L-arginine biosynthesis.</text>
</comment>
<comment type="subcellular location">
    <subcellularLocation>
        <location evidence="1">Cytoplasm</location>
    </subcellularLocation>
</comment>
<comment type="similarity">
    <text evidence="1">Belongs to the acetylglutamate kinase family. LysZ subfamily.</text>
</comment>
<name>LYSZ_SACI4</name>
<organism>
    <name type="scientific">Saccharolobus islandicus (strain M.14.25 / Kamchatka #1)</name>
    <name type="common">Sulfolobus islandicus</name>
    <dbReference type="NCBI Taxonomy" id="427317"/>
    <lineage>
        <taxon>Archaea</taxon>
        <taxon>Thermoproteota</taxon>
        <taxon>Thermoprotei</taxon>
        <taxon>Sulfolobales</taxon>
        <taxon>Sulfolobaceae</taxon>
        <taxon>Saccharolobus</taxon>
    </lineage>
</organism>
<evidence type="ECO:0000255" key="1">
    <source>
        <dbReference type="HAMAP-Rule" id="MF_02082"/>
    </source>
</evidence>
<proteinExistence type="inferred from homology"/>
<protein>
    <recommendedName>
        <fullName evidence="1">[LysW]-aminoadipate/[LysW]-glutamate kinase</fullName>
        <ecNumber evidence="1">2.7.2.17</ecNumber>
        <ecNumber evidence="1">2.7.2.19</ecNumber>
    </recommendedName>
</protein>
<keyword id="KW-0028">Amino-acid biosynthesis</keyword>
<keyword id="KW-0055">Arginine biosynthesis</keyword>
<keyword id="KW-0067">ATP-binding</keyword>
<keyword id="KW-0963">Cytoplasm</keyword>
<keyword id="KW-0418">Kinase</keyword>
<keyword id="KW-0457">Lysine biosynthesis</keyword>
<keyword id="KW-0547">Nucleotide-binding</keyword>
<keyword id="KW-0808">Transferase</keyword>
<accession>C3MYU1</accession>
<sequence>MIVVKIGGRVVKNSLDKVILDIANINDKVILVHGGGDIVTDYTKRLGIEPVFVTSPEGIRSRYTTKEELEVYIMAMSLINKTITSKLCSLGKNAIGITGVDGGLLLAERKKRIIVIDERGKKRIIEGGYTGKVKEVRSEVINHLMKLFDIIVVSPLALDVEESTPLNIDGDQAAFAISKAVKVNVLVILSDVEGVLVEGKVVDRLTPEEAKELSKKIGPGMNRKLLMAAESVENGVNKVIIGSGVKDRPVSSALELNGTVIVNG</sequence>
<gene>
    <name evidence="1" type="primary">lysZ</name>
    <name type="ordered locus">M1425_1983</name>
</gene>
<reference key="1">
    <citation type="journal article" date="2009" name="Proc. Natl. Acad. Sci. U.S.A.">
        <title>Biogeography of the Sulfolobus islandicus pan-genome.</title>
        <authorList>
            <person name="Reno M.L."/>
            <person name="Held N.L."/>
            <person name="Fields C.J."/>
            <person name="Burke P.V."/>
            <person name="Whitaker R.J."/>
        </authorList>
    </citation>
    <scope>NUCLEOTIDE SEQUENCE [LARGE SCALE GENOMIC DNA]</scope>
    <source>
        <strain>M.14.25 / Kamchatka #1</strain>
    </source>
</reference>
<feature type="chain" id="PRO_1000202571" description="[LysW]-aminoadipate/[LysW]-glutamate kinase">
    <location>
        <begin position="1"/>
        <end position="264"/>
    </location>
</feature>
<feature type="binding site" evidence="1">
    <location>
        <begin position="35"/>
        <end position="36"/>
    </location>
    <ligand>
        <name>substrate</name>
    </ligand>
</feature>
<feature type="binding site" evidence="1">
    <location>
        <position position="62"/>
    </location>
    <ligand>
        <name>substrate</name>
    </ligand>
</feature>
<feature type="binding site" evidence="1">
    <location>
        <position position="167"/>
    </location>
    <ligand>
        <name>substrate</name>
    </ligand>
</feature>
<feature type="site" description="Transition state stabilizer" evidence="1">
    <location>
        <position position="5"/>
    </location>
</feature>
<feature type="site" description="Transition state stabilizer" evidence="1">
    <location>
        <position position="224"/>
    </location>
</feature>
<dbReference type="EC" id="2.7.2.17" evidence="1"/>
<dbReference type="EC" id="2.7.2.19" evidence="1"/>
<dbReference type="EMBL" id="CP001400">
    <property type="protein sequence ID" value="ACP38725.1"/>
    <property type="molecule type" value="Genomic_DNA"/>
</dbReference>
<dbReference type="RefSeq" id="WP_012711951.1">
    <property type="nucleotide sequence ID" value="NC_012588.1"/>
</dbReference>
<dbReference type="SMR" id="C3MYU1"/>
<dbReference type="KEGG" id="sia:M1425_1983"/>
<dbReference type="HOGENOM" id="CLU_053680_2_0_2"/>
<dbReference type="UniPathway" id="UPA00033">
    <property type="reaction ID" value="UER00036"/>
</dbReference>
<dbReference type="UniPathway" id="UPA00068"/>
<dbReference type="Proteomes" id="UP000001350">
    <property type="component" value="Chromosome"/>
</dbReference>
<dbReference type="GO" id="GO:0005737">
    <property type="term" value="C:cytoplasm"/>
    <property type="evidence" value="ECO:0007669"/>
    <property type="project" value="UniProtKB-SubCell"/>
</dbReference>
<dbReference type="GO" id="GO:0003991">
    <property type="term" value="F:acetylglutamate kinase activity"/>
    <property type="evidence" value="ECO:0007669"/>
    <property type="project" value="TreeGrafter"/>
</dbReference>
<dbReference type="GO" id="GO:0005524">
    <property type="term" value="F:ATP binding"/>
    <property type="evidence" value="ECO:0007669"/>
    <property type="project" value="UniProtKB-KW"/>
</dbReference>
<dbReference type="GO" id="GO:0043744">
    <property type="term" value="F:N2-acetyl-L-aminoadipate kinase activity"/>
    <property type="evidence" value="ECO:0007669"/>
    <property type="project" value="RHEA"/>
</dbReference>
<dbReference type="GO" id="GO:0042450">
    <property type="term" value="P:arginine biosynthetic process via ornithine"/>
    <property type="evidence" value="ECO:0007669"/>
    <property type="project" value="UniProtKB-UniRule"/>
</dbReference>
<dbReference type="GO" id="GO:0006526">
    <property type="term" value="P:L-arginine biosynthetic process"/>
    <property type="evidence" value="ECO:0007669"/>
    <property type="project" value="UniProtKB-UniPathway"/>
</dbReference>
<dbReference type="GO" id="GO:0019878">
    <property type="term" value="P:lysine biosynthetic process via aminoadipic acid"/>
    <property type="evidence" value="ECO:0007669"/>
    <property type="project" value="UniProtKB-UniRule"/>
</dbReference>
<dbReference type="CDD" id="cd04251">
    <property type="entry name" value="AAK_NAGK-UC"/>
    <property type="match status" value="1"/>
</dbReference>
<dbReference type="Gene3D" id="3.40.1160.10">
    <property type="entry name" value="Acetylglutamate kinase-like"/>
    <property type="match status" value="1"/>
</dbReference>
<dbReference type="HAMAP" id="MF_02082">
    <property type="entry name" value="LysZ"/>
    <property type="match status" value="1"/>
</dbReference>
<dbReference type="InterPro" id="IPR036393">
    <property type="entry name" value="AceGlu_kinase-like_sf"/>
</dbReference>
<dbReference type="InterPro" id="IPR004662">
    <property type="entry name" value="AcgluKinase_fam"/>
</dbReference>
<dbReference type="InterPro" id="IPR001048">
    <property type="entry name" value="Asp/Glu/Uridylate_kinase"/>
</dbReference>
<dbReference type="InterPro" id="IPR037529">
    <property type="entry name" value="LysZ"/>
</dbReference>
<dbReference type="NCBIfam" id="TIGR00761">
    <property type="entry name" value="argB"/>
    <property type="match status" value="1"/>
</dbReference>
<dbReference type="NCBIfam" id="NF010662">
    <property type="entry name" value="PRK14058.1-4"/>
    <property type="match status" value="1"/>
</dbReference>
<dbReference type="PANTHER" id="PTHR23342">
    <property type="entry name" value="N-ACETYLGLUTAMATE SYNTHASE"/>
    <property type="match status" value="1"/>
</dbReference>
<dbReference type="PANTHER" id="PTHR23342:SF0">
    <property type="entry name" value="N-ACETYLGLUTAMATE SYNTHASE, MITOCHONDRIAL"/>
    <property type="match status" value="1"/>
</dbReference>
<dbReference type="Pfam" id="PF00696">
    <property type="entry name" value="AA_kinase"/>
    <property type="match status" value="1"/>
</dbReference>
<dbReference type="PIRSF" id="PIRSF000728">
    <property type="entry name" value="NAGK"/>
    <property type="match status" value="1"/>
</dbReference>
<dbReference type="SUPFAM" id="SSF53633">
    <property type="entry name" value="Carbamate kinase-like"/>
    <property type="match status" value="1"/>
</dbReference>